<keyword id="KW-0378">Hydrolase</keyword>
<keyword id="KW-0460">Magnesium</keyword>
<keyword id="KW-0479">Metal-binding</keyword>
<keyword id="KW-0546">Nucleotide metabolism</keyword>
<organism>
    <name type="scientific">Pseudomonas putida (strain W619)</name>
    <dbReference type="NCBI Taxonomy" id="390235"/>
    <lineage>
        <taxon>Bacteria</taxon>
        <taxon>Pseudomonadati</taxon>
        <taxon>Pseudomonadota</taxon>
        <taxon>Gammaproteobacteria</taxon>
        <taxon>Pseudomonadales</taxon>
        <taxon>Pseudomonadaceae</taxon>
        <taxon>Pseudomonas</taxon>
    </lineage>
</organism>
<comment type="function">
    <text evidence="1">This enzyme is involved in nucleotide metabolism: it produces dUMP, the immediate precursor of thymidine nucleotides and it decreases the intracellular concentration of dUTP so that uracil cannot be incorporated into DNA.</text>
</comment>
<comment type="catalytic activity">
    <reaction evidence="1">
        <text>dUTP + H2O = dUMP + diphosphate + H(+)</text>
        <dbReference type="Rhea" id="RHEA:10248"/>
        <dbReference type="ChEBI" id="CHEBI:15377"/>
        <dbReference type="ChEBI" id="CHEBI:15378"/>
        <dbReference type="ChEBI" id="CHEBI:33019"/>
        <dbReference type="ChEBI" id="CHEBI:61555"/>
        <dbReference type="ChEBI" id="CHEBI:246422"/>
        <dbReference type="EC" id="3.6.1.23"/>
    </reaction>
</comment>
<comment type="cofactor">
    <cofactor evidence="1">
        <name>Mg(2+)</name>
        <dbReference type="ChEBI" id="CHEBI:18420"/>
    </cofactor>
</comment>
<comment type="pathway">
    <text evidence="1">Pyrimidine metabolism; dUMP biosynthesis; dUMP from dCTP (dUTP route): step 2/2.</text>
</comment>
<comment type="similarity">
    <text evidence="1">Belongs to the dUTPase family.</text>
</comment>
<proteinExistence type="inferred from homology"/>
<accession>B1J4L9</accession>
<dbReference type="EC" id="3.6.1.23" evidence="1"/>
<dbReference type="EMBL" id="CP000949">
    <property type="protein sequence ID" value="ACA70690.1"/>
    <property type="molecule type" value="Genomic_DNA"/>
</dbReference>
<dbReference type="SMR" id="B1J4L9"/>
<dbReference type="STRING" id="390235.PputW619_0184"/>
<dbReference type="KEGG" id="ppw:PputW619_0184"/>
<dbReference type="eggNOG" id="COG0756">
    <property type="taxonomic scope" value="Bacteria"/>
</dbReference>
<dbReference type="HOGENOM" id="CLU_068508_1_1_6"/>
<dbReference type="OrthoDB" id="9809956at2"/>
<dbReference type="UniPathway" id="UPA00610">
    <property type="reaction ID" value="UER00666"/>
</dbReference>
<dbReference type="GO" id="GO:0004170">
    <property type="term" value="F:dUTP diphosphatase activity"/>
    <property type="evidence" value="ECO:0007669"/>
    <property type="project" value="UniProtKB-UniRule"/>
</dbReference>
<dbReference type="GO" id="GO:0000287">
    <property type="term" value="F:magnesium ion binding"/>
    <property type="evidence" value="ECO:0007669"/>
    <property type="project" value="UniProtKB-UniRule"/>
</dbReference>
<dbReference type="GO" id="GO:0006226">
    <property type="term" value="P:dUMP biosynthetic process"/>
    <property type="evidence" value="ECO:0007669"/>
    <property type="project" value="UniProtKB-UniRule"/>
</dbReference>
<dbReference type="GO" id="GO:0046081">
    <property type="term" value="P:dUTP catabolic process"/>
    <property type="evidence" value="ECO:0007669"/>
    <property type="project" value="InterPro"/>
</dbReference>
<dbReference type="CDD" id="cd07557">
    <property type="entry name" value="trimeric_dUTPase"/>
    <property type="match status" value="1"/>
</dbReference>
<dbReference type="FunFam" id="2.70.40.10:FF:000002">
    <property type="entry name" value="dUTP diphosphatase"/>
    <property type="match status" value="1"/>
</dbReference>
<dbReference type="Gene3D" id="2.70.40.10">
    <property type="match status" value="1"/>
</dbReference>
<dbReference type="HAMAP" id="MF_00116">
    <property type="entry name" value="dUTPase_bact"/>
    <property type="match status" value="1"/>
</dbReference>
<dbReference type="InterPro" id="IPR008181">
    <property type="entry name" value="dUTPase"/>
</dbReference>
<dbReference type="InterPro" id="IPR029054">
    <property type="entry name" value="dUTPase-like"/>
</dbReference>
<dbReference type="InterPro" id="IPR036157">
    <property type="entry name" value="dUTPase-like_sf"/>
</dbReference>
<dbReference type="InterPro" id="IPR033704">
    <property type="entry name" value="dUTPase_trimeric"/>
</dbReference>
<dbReference type="NCBIfam" id="TIGR00576">
    <property type="entry name" value="dut"/>
    <property type="match status" value="1"/>
</dbReference>
<dbReference type="NCBIfam" id="NF001862">
    <property type="entry name" value="PRK00601.1"/>
    <property type="match status" value="1"/>
</dbReference>
<dbReference type="PANTHER" id="PTHR11241">
    <property type="entry name" value="DEOXYURIDINE 5'-TRIPHOSPHATE NUCLEOTIDOHYDROLASE"/>
    <property type="match status" value="1"/>
</dbReference>
<dbReference type="PANTHER" id="PTHR11241:SF0">
    <property type="entry name" value="DEOXYURIDINE 5'-TRIPHOSPHATE NUCLEOTIDOHYDROLASE"/>
    <property type="match status" value="1"/>
</dbReference>
<dbReference type="Pfam" id="PF00692">
    <property type="entry name" value="dUTPase"/>
    <property type="match status" value="1"/>
</dbReference>
<dbReference type="SUPFAM" id="SSF51283">
    <property type="entry name" value="dUTPase-like"/>
    <property type="match status" value="1"/>
</dbReference>
<evidence type="ECO:0000255" key="1">
    <source>
        <dbReference type="HAMAP-Rule" id="MF_00116"/>
    </source>
</evidence>
<protein>
    <recommendedName>
        <fullName evidence="1">Deoxyuridine 5'-triphosphate nucleotidohydrolase</fullName>
        <shortName evidence="1">dUTPase</shortName>
        <ecNumber evidence="1">3.6.1.23</ecNumber>
    </recommendedName>
    <alternativeName>
        <fullName evidence="1">dUTP pyrophosphatase</fullName>
    </alternativeName>
</protein>
<sequence>MHALQAKILDPRLGSEFPLPQYATPGSAGLDLRALLKEDTVLEPGQTLLIPTGLSIYIGDPGLAAMILPRSGLGHKHGIVLGNLVGLIDSDYQGELMVSCWNRGNTPFTIAVGERIAQLVLVPVVQAHFEVVEAFDESQRGTGGFGHSGSH</sequence>
<name>DUT_PSEPW</name>
<feature type="chain" id="PRO_1000094980" description="Deoxyuridine 5'-triphosphate nucleotidohydrolase">
    <location>
        <begin position="1"/>
        <end position="151"/>
    </location>
</feature>
<feature type="binding site" evidence="1">
    <location>
        <begin position="70"/>
        <end position="72"/>
    </location>
    <ligand>
        <name>substrate</name>
    </ligand>
</feature>
<feature type="binding site" evidence="1">
    <location>
        <position position="83"/>
    </location>
    <ligand>
        <name>substrate</name>
    </ligand>
</feature>
<feature type="binding site" evidence="1">
    <location>
        <begin position="87"/>
        <end position="89"/>
    </location>
    <ligand>
        <name>substrate</name>
    </ligand>
</feature>
<feature type="binding site" evidence="1">
    <location>
        <position position="97"/>
    </location>
    <ligand>
        <name>substrate</name>
    </ligand>
</feature>
<gene>
    <name evidence="1" type="primary">dut</name>
    <name type="ordered locus">PputW619_0184</name>
</gene>
<reference key="1">
    <citation type="submission" date="2008-02" db="EMBL/GenBank/DDBJ databases">
        <title>Complete sequence of Pseudomonas putida W619.</title>
        <authorList>
            <person name="Copeland A."/>
            <person name="Lucas S."/>
            <person name="Lapidus A."/>
            <person name="Barry K."/>
            <person name="Detter J.C."/>
            <person name="Glavina del Rio T."/>
            <person name="Dalin E."/>
            <person name="Tice H."/>
            <person name="Pitluck S."/>
            <person name="Chain P."/>
            <person name="Malfatti S."/>
            <person name="Shin M."/>
            <person name="Vergez L."/>
            <person name="Schmutz J."/>
            <person name="Larimer F."/>
            <person name="Land M."/>
            <person name="Hauser L."/>
            <person name="Kyrpides N."/>
            <person name="Kim E."/>
            <person name="Taghavi S."/>
            <person name="Vangronsveld D."/>
            <person name="van der Lelie D."/>
            <person name="Richardson P."/>
        </authorList>
    </citation>
    <scope>NUCLEOTIDE SEQUENCE [LARGE SCALE GENOMIC DNA]</scope>
    <source>
        <strain>W619</strain>
    </source>
</reference>